<proteinExistence type="evidence at protein level"/>
<name>YOP1_YEAST</name>
<reference key="1">
    <citation type="submission" date="1998-07" db="EMBL/GenBank/DDBJ databases">
        <authorList>
            <person name="Matern H.T."/>
            <person name="Gallwitz D."/>
        </authorList>
    </citation>
    <scope>NUCLEOTIDE SEQUENCE [GENOMIC DNA]</scope>
</reference>
<reference key="2">
    <citation type="journal article" date="1997" name="Nature">
        <title>The nucleotide sequence of Saccharomyces cerevisiae chromosome XVI.</title>
        <authorList>
            <person name="Bussey H."/>
            <person name="Storms R.K."/>
            <person name="Ahmed A."/>
            <person name="Albermann K."/>
            <person name="Allen E."/>
            <person name="Ansorge W."/>
            <person name="Araujo R."/>
            <person name="Aparicio A."/>
            <person name="Barrell B.G."/>
            <person name="Badcock K."/>
            <person name="Benes V."/>
            <person name="Botstein D."/>
            <person name="Bowman S."/>
            <person name="Brueckner M."/>
            <person name="Carpenter J."/>
            <person name="Cherry J.M."/>
            <person name="Chung E."/>
            <person name="Churcher C.M."/>
            <person name="Coster F."/>
            <person name="Davis K."/>
            <person name="Davis R.W."/>
            <person name="Dietrich F.S."/>
            <person name="Delius H."/>
            <person name="DiPaolo T."/>
            <person name="Dubois E."/>
            <person name="Duesterhoeft A."/>
            <person name="Duncan M."/>
            <person name="Floeth M."/>
            <person name="Fortin N."/>
            <person name="Friesen J.D."/>
            <person name="Fritz C."/>
            <person name="Goffeau A."/>
            <person name="Hall J."/>
            <person name="Hebling U."/>
            <person name="Heumann K."/>
            <person name="Hilbert H."/>
            <person name="Hillier L.W."/>
            <person name="Hunicke-Smith S."/>
            <person name="Hyman R.W."/>
            <person name="Johnston M."/>
            <person name="Kalman S."/>
            <person name="Kleine K."/>
            <person name="Komp C."/>
            <person name="Kurdi O."/>
            <person name="Lashkari D."/>
            <person name="Lew H."/>
            <person name="Lin A."/>
            <person name="Lin D."/>
            <person name="Louis E.J."/>
            <person name="Marathe R."/>
            <person name="Messenguy F."/>
            <person name="Mewes H.-W."/>
            <person name="Mirtipati S."/>
            <person name="Moestl D."/>
            <person name="Mueller-Auer S."/>
            <person name="Namath A."/>
            <person name="Nentwich U."/>
            <person name="Oefner P."/>
            <person name="Pearson D."/>
            <person name="Petel F.X."/>
            <person name="Pohl T.M."/>
            <person name="Purnelle B."/>
            <person name="Rajandream M.A."/>
            <person name="Rechmann S."/>
            <person name="Rieger M."/>
            <person name="Riles L."/>
            <person name="Roberts D."/>
            <person name="Schaefer M."/>
            <person name="Scharfe M."/>
            <person name="Scherens B."/>
            <person name="Schramm S."/>
            <person name="Schroeder M."/>
            <person name="Sdicu A.-M."/>
            <person name="Tettelin H."/>
            <person name="Urrestarazu L.A."/>
            <person name="Ushinsky S."/>
            <person name="Vierendeels F."/>
            <person name="Vissers S."/>
            <person name="Voss H."/>
            <person name="Walsh S.V."/>
            <person name="Wambutt R."/>
            <person name="Wang Y."/>
            <person name="Wedler E."/>
            <person name="Wedler H."/>
            <person name="Winnett E."/>
            <person name="Zhong W.-W."/>
            <person name="Zollner A."/>
            <person name="Vo D.H."/>
            <person name="Hani J."/>
        </authorList>
    </citation>
    <scope>NUCLEOTIDE SEQUENCE [LARGE SCALE GENOMIC DNA]</scope>
    <source>
        <strain>ATCC 204508 / S288c</strain>
    </source>
</reference>
<reference key="3">
    <citation type="journal article" date="2014" name="G3 (Bethesda)">
        <title>The reference genome sequence of Saccharomyces cerevisiae: Then and now.</title>
        <authorList>
            <person name="Engel S.R."/>
            <person name="Dietrich F.S."/>
            <person name="Fisk D.G."/>
            <person name="Binkley G."/>
            <person name="Balakrishnan R."/>
            <person name="Costanzo M.C."/>
            <person name="Dwight S.S."/>
            <person name="Hitz B.C."/>
            <person name="Karra K."/>
            <person name="Nash R.S."/>
            <person name="Weng S."/>
            <person name="Wong E.D."/>
            <person name="Lloyd P."/>
            <person name="Skrzypek M.S."/>
            <person name="Miyasato S.R."/>
            <person name="Simison M."/>
            <person name="Cherry J.M."/>
        </authorList>
    </citation>
    <scope>GENOME REANNOTATION</scope>
    <source>
        <strain>ATCC 204508 / S288c</strain>
    </source>
</reference>
<reference key="4">
    <citation type="submission" date="2005-05" db="UniProtKB">
        <authorList>
            <person name="Bienvenut W.V."/>
            <person name="Peters C."/>
        </authorList>
    </citation>
    <scope>PROTEIN SEQUENCE OF 2-13; 24-31 AND 143-150</scope>
    <scope>CLEAVAGE OF INITIATOR METHIONINE</scope>
    <scope>ACETYLATION AT SER-2</scope>
    <scope>IDENTIFICATION BY MASS SPECTROMETRY</scope>
</reference>
<reference key="5">
    <citation type="journal article" date="2001" name="J. Biol. Chem.">
        <title>Yop1p, the yeast homolog of the polyposis locus protein 1, interacts with Yip1p and negatively regulates cell growth.</title>
        <authorList>
            <person name="Calero M."/>
            <person name="Whittaker G.R."/>
            <person name="Collins R.N."/>
        </authorList>
    </citation>
    <scope>INTERACTION WITH YIP1</scope>
    <scope>SUBCELLULAR LOCATION</scope>
</reference>
<reference key="6">
    <citation type="journal article" date="2002" name="Plant Physiol.">
        <title>Function of a plant stress-induced gene, HVA22. Synthetic enhancement screen with its yeast homolog reveals its role in vesicular traffic.</title>
        <authorList>
            <person name="Brands A."/>
            <person name="Ho T.-H.D."/>
        </authorList>
    </citation>
    <scope>FUNCTION</scope>
</reference>
<reference key="7">
    <citation type="journal article" date="2003" name="Nature">
        <title>Global analysis of protein localization in budding yeast.</title>
        <authorList>
            <person name="Huh W.-K."/>
            <person name="Falvo J.V."/>
            <person name="Gerke L.C."/>
            <person name="Carroll A.S."/>
            <person name="Howson R.W."/>
            <person name="Weissman J.S."/>
            <person name="O'Shea E.K."/>
        </authorList>
    </citation>
    <scope>SUBCELLULAR LOCATION [LARGE SCALE ANALYSIS]</scope>
</reference>
<reference key="8">
    <citation type="journal article" date="2003" name="Nature">
        <title>Global analysis of protein expression in yeast.</title>
        <authorList>
            <person name="Ghaemmaghami S."/>
            <person name="Huh W.-K."/>
            <person name="Bower K."/>
            <person name="Howson R.W."/>
            <person name="Belle A."/>
            <person name="Dephoure N."/>
            <person name="O'Shea E.K."/>
            <person name="Weissman J.S."/>
        </authorList>
    </citation>
    <scope>LEVEL OF PROTEIN EXPRESSION [LARGE SCALE ANALYSIS]</scope>
</reference>
<reference key="9">
    <citation type="journal article" date="2008" name="J. Biol. Chem.">
        <title>The reticulon and DP1/Yop1p proteins form immobile oligomers in the tubular endoplasmic reticulum.</title>
        <authorList>
            <person name="Shibata Y."/>
            <person name="Voss C."/>
            <person name="Rist J.M."/>
            <person name="Hu J."/>
            <person name="Rapoport T.A."/>
            <person name="Prinz W.A."/>
            <person name="Voeltz G.K."/>
        </authorList>
    </citation>
    <scope>SUBUNIT</scope>
    <scope>SUBCELLULAR LOCATION</scope>
</reference>
<reference key="10">
    <citation type="journal article" date="2012" name="Proc. Natl. Acad. Sci. U.S.A.">
        <title>N-terminal acetylome analyses and functional insights of the N-terminal acetyltransferase NatB.</title>
        <authorList>
            <person name="Van Damme P."/>
            <person name="Lasa M."/>
            <person name="Polevoda B."/>
            <person name="Gazquez C."/>
            <person name="Elosegui-Artola A."/>
            <person name="Kim D.S."/>
            <person name="De Juan-Pardo E."/>
            <person name="Demeyer K."/>
            <person name="Hole K."/>
            <person name="Larrea E."/>
            <person name="Timmerman E."/>
            <person name="Prieto J."/>
            <person name="Arnesen T."/>
            <person name="Sherman F."/>
            <person name="Gevaert K."/>
            <person name="Aldabe R."/>
        </authorList>
    </citation>
    <scope>ACETYLATION [LARGE SCALE ANALYSIS] AT SER-2</scope>
    <scope>CLEAVAGE OF INITIATOR METHIONINE [LARGE SCALE ANALYSIS]</scope>
    <scope>IDENTIFICATION BY MASS SPECTROMETRY [LARGE SCALE ANALYSIS]</scope>
</reference>
<reference key="11">
    <citation type="journal article" date="2015" name="Proc. Natl. Acad. Sci. U.S.A.">
        <title>A conserved amphipathic helix is required for membrane tubule formation by Yop1p.</title>
        <authorList>
            <person name="Brady J.P."/>
            <person name="Claridge J.K."/>
            <person name="Smith P.G."/>
            <person name="Schnell J.R."/>
        </authorList>
    </citation>
    <scope>FUNCTION</scope>
    <scope>TOPOLOGY</scope>
</reference>
<reference key="12">
    <citation type="journal article" date="2020" name="Mol. Microbiol.">
        <title>A Plasmodium homolog of ER tubule-forming proteins is required for parasite virulence.</title>
        <authorList>
            <person name="Shi X."/>
            <person name="Hai L."/>
            <person name="Govindasamy K."/>
            <person name="Gao J."/>
            <person name="Coppens I."/>
            <person name="Hu J."/>
            <person name="Wang Q."/>
            <person name="Bhanot P."/>
        </authorList>
    </citation>
    <scope>FUNCTION</scope>
    <scope>DISRUPTION PHENOTYPE</scope>
</reference>
<keyword id="KW-0007">Acetylation</keyword>
<keyword id="KW-0903">Direct protein sequencing</keyword>
<keyword id="KW-0256">Endoplasmic reticulum</keyword>
<keyword id="KW-0333">Golgi apparatus</keyword>
<keyword id="KW-0472">Membrane</keyword>
<keyword id="KW-1185">Reference proteome</keyword>
<keyword id="KW-0812">Transmembrane</keyword>
<keyword id="KW-1133">Transmembrane helix</keyword>
<dbReference type="EMBL" id="AJ007902">
    <property type="protein sequence ID" value="CAA07720.1"/>
    <property type="molecule type" value="Genomic_DNA"/>
</dbReference>
<dbReference type="EMBL" id="Z71255">
    <property type="protein sequence ID" value="CAA95024.1"/>
    <property type="molecule type" value="Genomic_DNA"/>
</dbReference>
<dbReference type="EMBL" id="Z49274">
    <property type="protein sequence ID" value="CAA89282.1"/>
    <property type="molecule type" value="Genomic_DNA"/>
</dbReference>
<dbReference type="EMBL" id="BK006949">
    <property type="protein sequence ID" value="DAA11454.1"/>
    <property type="molecule type" value="Genomic_DNA"/>
</dbReference>
<dbReference type="PIR" id="S54502">
    <property type="entry name" value="S54502"/>
</dbReference>
<dbReference type="RefSeq" id="NP_015353.1">
    <property type="nucleotide sequence ID" value="NM_001184125.1"/>
</dbReference>
<dbReference type="BioGRID" id="36206">
    <property type="interactions" value="130"/>
</dbReference>
<dbReference type="DIP" id="DIP-3914N"/>
<dbReference type="FunCoup" id="Q12402">
    <property type="interactions" value="492"/>
</dbReference>
<dbReference type="IntAct" id="Q12402">
    <property type="interactions" value="13"/>
</dbReference>
<dbReference type="MINT" id="Q12402"/>
<dbReference type="STRING" id="4932.YPR028W"/>
<dbReference type="TCDB" id="8.A.108.1.1">
    <property type="family name" value="the curvature-stabilizing protein yop1 (yop1) family"/>
</dbReference>
<dbReference type="iPTMnet" id="Q12402"/>
<dbReference type="PaxDb" id="4932-YPR028W"/>
<dbReference type="PeptideAtlas" id="Q12402"/>
<dbReference type="TopDownProteomics" id="Q12402"/>
<dbReference type="DNASU" id="856140"/>
<dbReference type="EnsemblFungi" id="YPR028W_mRNA">
    <property type="protein sequence ID" value="YPR028W"/>
    <property type="gene ID" value="YPR028W"/>
</dbReference>
<dbReference type="GeneID" id="856140"/>
<dbReference type="KEGG" id="sce:YPR028W"/>
<dbReference type="AGR" id="SGD:S000006232"/>
<dbReference type="SGD" id="S000006232">
    <property type="gene designation" value="YOP1"/>
</dbReference>
<dbReference type="VEuPathDB" id="FungiDB:YPR028W"/>
<dbReference type="eggNOG" id="KOG1725">
    <property type="taxonomic scope" value="Eukaryota"/>
</dbReference>
<dbReference type="GeneTree" id="ENSGT00940000176263"/>
<dbReference type="HOGENOM" id="CLU_028431_2_1_1"/>
<dbReference type="InParanoid" id="Q12402"/>
<dbReference type="OMA" id="CMIPGPW"/>
<dbReference type="OrthoDB" id="10009287at2759"/>
<dbReference type="BioCyc" id="YEAST:G3O-34187-MONOMER"/>
<dbReference type="BioGRID-ORCS" id="856140">
    <property type="hits" value="0 hits in 10 CRISPR screens"/>
</dbReference>
<dbReference type="PRO" id="PR:Q12402"/>
<dbReference type="Proteomes" id="UP000002311">
    <property type="component" value="Chromosome XVI"/>
</dbReference>
<dbReference type="RNAct" id="Q12402">
    <property type="molecule type" value="protein"/>
</dbReference>
<dbReference type="GO" id="GO:0071944">
    <property type="term" value="C:cell periphery"/>
    <property type="evidence" value="ECO:0007005"/>
    <property type="project" value="SGD"/>
</dbReference>
<dbReference type="GO" id="GO:0005933">
    <property type="term" value="C:cellular bud"/>
    <property type="evidence" value="ECO:0007005"/>
    <property type="project" value="SGD"/>
</dbReference>
<dbReference type="GO" id="GO:0005934">
    <property type="term" value="C:cellular bud tip"/>
    <property type="evidence" value="ECO:0007005"/>
    <property type="project" value="SGD"/>
</dbReference>
<dbReference type="GO" id="GO:0005783">
    <property type="term" value="C:endoplasmic reticulum"/>
    <property type="evidence" value="ECO:0000314"/>
    <property type="project" value="SGD"/>
</dbReference>
<dbReference type="GO" id="GO:0005789">
    <property type="term" value="C:endoplasmic reticulum membrane"/>
    <property type="evidence" value="ECO:0007669"/>
    <property type="project" value="UniProtKB-SubCell"/>
</dbReference>
<dbReference type="GO" id="GO:0071782">
    <property type="term" value="C:endoplasmic reticulum tubular network"/>
    <property type="evidence" value="ECO:0000314"/>
    <property type="project" value="SGD"/>
</dbReference>
<dbReference type="GO" id="GO:0000139">
    <property type="term" value="C:Golgi membrane"/>
    <property type="evidence" value="ECO:0007669"/>
    <property type="project" value="UniProtKB-SubCell"/>
</dbReference>
<dbReference type="GO" id="GO:0016020">
    <property type="term" value="C:membrane"/>
    <property type="evidence" value="ECO:0000314"/>
    <property type="project" value="SGD"/>
</dbReference>
<dbReference type="GO" id="GO:0048309">
    <property type="term" value="P:endoplasmic reticulum inheritance"/>
    <property type="evidence" value="ECO:0000316"/>
    <property type="project" value="UniProtKB"/>
</dbReference>
<dbReference type="GO" id="GO:0007029">
    <property type="term" value="P:endoplasmic reticulum organization"/>
    <property type="evidence" value="ECO:0000316"/>
    <property type="project" value="SGD"/>
</dbReference>
<dbReference type="GO" id="GO:0071786">
    <property type="term" value="P:endoplasmic reticulum tubular network organization"/>
    <property type="evidence" value="ECO:0000315"/>
    <property type="project" value="UniProtKB"/>
</dbReference>
<dbReference type="GO" id="GO:0032581">
    <property type="term" value="P:ER-dependent peroxisome organization"/>
    <property type="evidence" value="ECO:0000316"/>
    <property type="project" value="SGD"/>
</dbReference>
<dbReference type="GO" id="GO:0051292">
    <property type="term" value="P:nuclear pore complex assembly"/>
    <property type="evidence" value="ECO:0000316"/>
    <property type="project" value="SGD"/>
</dbReference>
<dbReference type="GO" id="GO:0034976">
    <property type="term" value="P:response to endoplasmic reticulum stress"/>
    <property type="evidence" value="ECO:0000316"/>
    <property type="project" value="SGD"/>
</dbReference>
<dbReference type="GO" id="GO:0007033">
    <property type="term" value="P:vacuole organization"/>
    <property type="evidence" value="ECO:0000315"/>
    <property type="project" value="UniProtKB"/>
</dbReference>
<dbReference type="GO" id="GO:0016192">
    <property type="term" value="P:vesicle-mediated transport"/>
    <property type="evidence" value="ECO:0000315"/>
    <property type="project" value="SGD"/>
</dbReference>
<dbReference type="InterPro" id="IPR004345">
    <property type="entry name" value="TB2_DP1_HVA22"/>
</dbReference>
<dbReference type="PANTHER" id="PTHR12300">
    <property type="entry name" value="HVA22-LIKE PROTEINS"/>
    <property type="match status" value="1"/>
</dbReference>
<dbReference type="PANTHER" id="PTHR12300:SF161">
    <property type="entry name" value="RECEPTOR EXPRESSION-ENHANCING PROTEIN"/>
    <property type="match status" value="1"/>
</dbReference>
<dbReference type="Pfam" id="PF03134">
    <property type="entry name" value="TB2_DP1_HVA22"/>
    <property type="match status" value="1"/>
</dbReference>
<gene>
    <name type="primary">YOP1</name>
    <name type="synonym">YIP2</name>
    <name type="ordered locus">YPR028W</name>
    <name type="ORF">YP9367.08</name>
</gene>
<feature type="initiator methionine" description="Removed" evidence="8 11">
    <location>
        <position position="1"/>
    </location>
</feature>
<feature type="chain" id="PRO_0000101859" description="Protein YOP1">
    <location>
        <begin position="2"/>
        <end position="180"/>
    </location>
</feature>
<feature type="topological domain" description="Cytoplasmic" evidence="10">
    <location>
        <begin position="2"/>
        <end position="35"/>
    </location>
</feature>
<feature type="transmembrane region" description="Helical" evidence="10">
    <location>
        <begin position="36"/>
        <end position="55"/>
    </location>
</feature>
<feature type="topological domain" description="Lumenal" evidence="10">
    <location>
        <begin position="56"/>
        <end position="57"/>
    </location>
</feature>
<feature type="transmembrane region" description="Helical" evidence="10">
    <location>
        <begin position="58"/>
        <end position="78"/>
    </location>
</feature>
<feature type="topological domain" description="Cytoplasmic" evidence="10">
    <location>
        <begin position="79"/>
        <end position="88"/>
    </location>
</feature>
<feature type="transmembrane region" description="Helical" evidence="10">
    <location>
        <begin position="89"/>
        <end position="105"/>
    </location>
</feature>
<feature type="topological domain" description="Lumenal" evidence="10">
    <location>
        <begin position="106"/>
        <end position="108"/>
    </location>
</feature>
<feature type="transmembrane region" description="Helical" evidence="10">
    <location>
        <begin position="109"/>
        <end position="127"/>
    </location>
</feature>
<feature type="topological domain" description="Cytoplasmic" evidence="10">
    <location>
        <begin position="128"/>
        <end position="180"/>
    </location>
</feature>
<feature type="region of interest" description="Interaction with YIP1" evidence="2">
    <location>
        <begin position="2"/>
        <end position="17"/>
    </location>
</feature>
<feature type="modified residue" description="N-acetylserine" evidence="8 11">
    <location>
        <position position="2"/>
    </location>
</feature>
<accession>Q12402</accession>
<accession>D6W438</accession>
<sequence length="180" mass="20270">MSEYASSIHSQMKQFDTKYSGNRILQQLENKTNLPKSYLVAGLGFAYLLLIFINVGGVGEILSNFAGFVLPAYLSLVALKTPTSTDDTQLLTYWIVFSFLSVIEFWSKAILYLIPFYWFLKTVFLIYIALPQTGGARMIYQKIVAPLTDRYILRDVSKTEKDEIRASVNEASKATGASVH</sequence>
<protein>
    <recommendedName>
        <fullName>Protein YOP1</fullName>
    </recommendedName>
    <alternativeName>
        <fullName>YIP1 partner protein 1</fullName>
    </alternativeName>
    <alternativeName>
        <fullName>YPT-interacting protein 2</fullName>
    </alternativeName>
</protein>
<comment type="function">
    <text evidence="3 6 7 10">Required to generate and maintain the structure of the tubular endoplasmic reticulum network and the vacuole (PubMed:25646439, PubMed:32432369). Induces high curvature in membranes and causes membrane tubule formation (Probable). Involved in membrane/vesicle trafficking (PubMed:12427979).</text>
</comment>
<comment type="subunit">
    <text evidence="2 5">Oligomer (PubMed:18442980). Interacts with YIP1 (PubMed:11278413).</text>
</comment>
<comment type="interaction">
    <interactant intactId="EBI-37092">
        <id>Q12402</id>
    </interactant>
    <interactant intactId="EBI-38020">
        <id>Q04947</id>
        <label>RTN1</label>
    </interactant>
    <organismsDiffer>false</organismsDiffer>
    <experiments>2</experiments>
</comment>
<comment type="interaction">
    <interactant intactId="EBI-37092">
        <id>Q12402</id>
    </interactant>
    <interactant intactId="EBI-37523">
        <id>Q99287</id>
        <label>SEY1</label>
    </interactant>
    <organismsDiffer>false</organismsDiffer>
    <experiments>3</experiments>
</comment>
<comment type="interaction">
    <interactant intactId="EBI-37092">
        <id>Q12402</id>
    </interactant>
    <interactant intactId="EBI-15874242">
        <id>P03588</id>
        <label>ORF1a</label>
    </interactant>
    <organismsDiffer>true</organismsDiffer>
    <experiments>4</experiments>
</comment>
<comment type="subcellular location">
    <subcellularLocation>
        <location evidence="2 5">Endoplasmic reticulum membrane</location>
        <topology evidence="6">Multi-pass membrane protein</topology>
    </subcellularLocation>
    <subcellularLocation>
        <location evidence="2">Golgi apparatus membrane</location>
        <topology evidence="1">Multi-pass membrane protein</topology>
    </subcellularLocation>
</comment>
<comment type="domain">
    <text evidence="10">The short lumenal loops between transmembrane domains 1 and 2 and between transmembrane domains 3 and 4 may impart a wedge-like configuration, thus deforming membranes.</text>
</comment>
<comment type="disruption phenotype">
    <text evidence="7">Cells have more than three vacuoles with a grape-like assembly.</text>
</comment>
<comment type="miscellaneous">
    <text evidence="4">Present with 1759 molecules/cell in log phase SD medium.</text>
</comment>
<comment type="similarity">
    <text evidence="9">Belongs to the DP1 family.</text>
</comment>
<evidence type="ECO:0000255" key="1"/>
<evidence type="ECO:0000269" key="2">
    <source>
    </source>
</evidence>
<evidence type="ECO:0000269" key="3">
    <source>
    </source>
</evidence>
<evidence type="ECO:0000269" key="4">
    <source>
    </source>
</evidence>
<evidence type="ECO:0000269" key="5">
    <source>
    </source>
</evidence>
<evidence type="ECO:0000269" key="6">
    <source>
    </source>
</evidence>
<evidence type="ECO:0000269" key="7">
    <source>
    </source>
</evidence>
<evidence type="ECO:0000269" key="8">
    <source ref="4"/>
</evidence>
<evidence type="ECO:0000305" key="9"/>
<evidence type="ECO:0000305" key="10">
    <source>
    </source>
</evidence>
<evidence type="ECO:0007744" key="11">
    <source>
    </source>
</evidence>
<organism>
    <name type="scientific">Saccharomyces cerevisiae (strain ATCC 204508 / S288c)</name>
    <name type="common">Baker's yeast</name>
    <dbReference type="NCBI Taxonomy" id="559292"/>
    <lineage>
        <taxon>Eukaryota</taxon>
        <taxon>Fungi</taxon>
        <taxon>Dikarya</taxon>
        <taxon>Ascomycota</taxon>
        <taxon>Saccharomycotina</taxon>
        <taxon>Saccharomycetes</taxon>
        <taxon>Saccharomycetales</taxon>
        <taxon>Saccharomycetaceae</taxon>
        <taxon>Saccharomyces</taxon>
    </lineage>
</organism>